<gene>
    <name type="primary">Gsk3a</name>
</gene>
<feature type="initiator methionine" description="Removed" evidence="2">
    <location>
        <position position="1"/>
    </location>
</feature>
<feature type="chain" id="PRO_0000280395" description="Glycogen synthase kinase-3 alpha">
    <location>
        <begin position="2"/>
        <end position="490"/>
    </location>
</feature>
<feature type="domain" description="Protein kinase" evidence="4">
    <location>
        <begin position="119"/>
        <end position="404"/>
    </location>
</feature>
<feature type="region of interest" description="Disordered" evidence="6">
    <location>
        <begin position="1"/>
        <end position="97"/>
    </location>
</feature>
<feature type="region of interest" description="Disordered" evidence="6">
    <location>
        <begin position="451"/>
        <end position="490"/>
    </location>
</feature>
<feature type="compositionally biased region" description="Gly residues" evidence="6">
    <location>
        <begin position="1"/>
        <end position="15"/>
    </location>
</feature>
<feature type="compositionally biased region" description="Gly residues" evidence="6">
    <location>
        <begin position="25"/>
        <end position="82"/>
    </location>
</feature>
<feature type="compositionally biased region" description="Polar residues" evidence="6">
    <location>
        <begin position="455"/>
        <end position="480"/>
    </location>
</feature>
<feature type="compositionally biased region" description="Low complexity" evidence="6">
    <location>
        <begin position="481"/>
        <end position="490"/>
    </location>
</feature>
<feature type="active site" description="Proton acceptor" evidence="4 5">
    <location>
        <position position="244"/>
    </location>
</feature>
<feature type="binding site" evidence="4">
    <location>
        <begin position="125"/>
        <end position="133"/>
    </location>
    <ligand>
        <name>ATP</name>
        <dbReference type="ChEBI" id="CHEBI:30616"/>
    </ligand>
</feature>
<feature type="binding site" evidence="4">
    <location>
        <position position="148"/>
    </location>
    <ligand>
        <name>ATP</name>
        <dbReference type="ChEBI" id="CHEBI:30616"/>
    </ligand>
</feature>
<feature type="modified residue" description="N-acetylserine" evidence="2">
    <location>
        <position position="2"/>
    </location>
</feature>
<feature type="modified residue" description="Phosphoserine" evidence="2">
    <location>
        <position position="2"/>
    </location>
</feature>
<feature type="modified residue" description="Phosphoserine; by PKB/AKT1" evidence="7">
    <location>
        <position position="21"/>
    </location>
</feature>
<feature type="modified residue" description="Phosphoserine" evidence="2">
    <location>
        <position position="72"/>
    </location>
</feature>
<feature type="modified residue" description="Phosphoserine" evidence="2">
    <location>
        <position position="77"/>
    </location>
</feature>
<feature type="modified residue" description="Phosphoserine" evidence="2">
    <location>
        <position position="97"/>
    </location>
</feature>
<feature type="modified residue" description="Phosphotyrosine" evidence="1">
    <location>
        <position position="279"/>
    </location>
</feature>
<feature type="mutagenesis site" description="Loss of phosphorylation; No inhibition of activity and constitutively active." evidence="7">
    <original>S</original>
    <variation>A</variation>
    <location>
        <position position="21"/>
    </location>
</feature>
<protein>
    <recommendedName>
        <fullName>Glycogen synthase kinase-3 alpha</fullName>
        <shortName>GSK-3 alpha</shortName>
        <ecNumber>2.7.11.26</ecNumber>
    </recommendedName>
    <alternativeName>
        <fullName>Serine/threonine-protein kinase GSK3A</fullName>
        <ecNumber evidence="12">2.7.11.1</ecNumber>
    </alternativeName>
</protein>
<sequence length="490" mass="51661">MSGGGPSGGGPGGSGRARTSSFAEPGGGGGGGGGGPGGSASGPGGTGGGKASVGAMGGGVGASSSGGGPSGSGGGGSGGPGAGTSFPPPGVKLGRDSGKVTTVVATVGQGPERSQEVAYTDIKVIGNGSFGVVYQARLAETRELVAIKKVLQDKRFKNRELQIMRKLDHCNIVRLRYFFYSSGEKKDELYLNLVLEYVPETVYRVARHFTKAKLITPIIYIKVYMYQLFRSLAYIHSQGVCHRDIKPQNLLVDPDTAVLKLCDFGSAKQLVRGEPNVSYICSRYYRAPELIFGATDYTSSIDVWSAGCVLAELLLGQPIFPGDSGVDQLVEIIKVLGTPTREQIREMNPNYTEFKFPQIKAHPWTKVFKSSKTPPEAIALCSSLLEYTPSSRLSPLEACAHSFFDELRRLGAQLPNDRPLPPLFNFSPGELSIQPSLNAILIPPHLRSPAGPASPLTTSYNPSSQALTEAQTGQDWQPSDATTATLASSS</sequence>
<dbReference type="EC" id="2.7.11.26"/>
<dbReference type="EC" id="2.7.11.1" evidence="12"/>
<dbReference type="EMBL" id="AC156992">
    <property type="status" value="NOT_ANNOTATED_CDS"/>
    <property type="molecule type" value="Genomic_DNA"/>
</dbReference>
<dbReference type="EMBL" id="BC111032">
    <property type="protein sequence ID" value="AAI11033.1"/>
    <property type="molecule type" value="mRNA"/>
</dbReference>
<dbReference type="CCDS" id="CCDS20976.1"/>
<dbReference type="RefSeq" id="NP_001026837.1">
    <property type="nucleotide sequence ID" value="NM_001031667.1"/>
</dbReference>
<dbReference type="SMR" id="Q2NL51"/>
<dbReference type="BioGRID" id="546781">
    <property type="interactions" value="19"/>
</dbReference>
<dbReference type="ComplexPortal" id="CPX-453">
    <property type="entry name" value="Beta-catenin destruction core complex, Apc-Axin1-Gsk3a variant"/>
</dbReference>
<dbReference type="ComplexPortal" id="CPX-456">
    <property type="entry name" value="Beta-catenin destruction core complex, Apc2-Axin1-Gsk3a variant"/>
</dbReference>
<dbReference type="ComplexPortal" id="CPX-457">
    <property type="entry name" value="Beta-catenin destruction core complex, Apc-Axin2-Gsk3a variant"/>
</dbReference>
<dbReference type="ComplexPortal" id="CPX-458">
    <property type="entry name" value="Beta-catenin destruction core complex, Apc2-Axin2-Gsk3a variant"/>
</dbReference>
<dbReference type="FunCoup" id="Q2NL51">
    <property type="interactions" value="2267"/>
</dbReference>
<dbReference type="IntAct" id="Q2NL51">
    <property type="interactions" value="2"/>
</dbReference>
<dbReference type="STRING" id="10090.ENSMUSP00000071654"/>
<dbReference type="ChEMBL" id="CHEMBL2176843"/>
<dbReference type="iPTMnet" id="Q2NL51"/>
<dbReference type="PhosphoSitePlus" id="Q2NL51"/>
<dbReference type="SwissPalm" id="Q2NL51"/>
<dbReference type="jPOST" id="Q2NL51"/>
<dbReference type="PaxDb" id="10090-ENSMUSP00000071654"/>
<dbReference type="ProteomicsDB" id="269640"/>
<dbReference type="Pumba" id="Q2NL51"/>
<dbReference type="Antibodypedia" id="3833">
    <property type="antibodies" value="1204 antibodies from 48 providers"/>
</dbReference>
<dbReference type="Ensembl" id="ENSMUST00000071739.12">
    <property type="protein sequence ID" value="ENSMUSP00000071654.6"/>
    <property type="gene ID" value="ENSMUSG00000057177.13"/>
</dbReference>
<dbReference type="GeneID" id="606496"/>
<dbReference type="KEGG" id="mmu:606496"/>
<dbReference type="UCSC" id="uc009frx.1">
    <property type="organism name" value="mouse"/>
</dbReference>
<dbReference type="AGR" id="MGI:2152453"/>
<dbReference type="CTD" id="2931"/>
<dbReference type="MGI" id="MGI:2152453">
    <property type="gene designation" value="Gsk3a"/>
</dbReference>
<dbReference type="VEuPathDB" id="HostDB:ENSMUSG00000057177"/>
<dbReference type="eggNOG" id="KOG0658">
    <property type="taxonomic scope" value="Eukaryota"/>
</dbReference>
<dbReference type="GeneTree" id="ENSGT00520000055635"/>
<dbReference type="InParanoid" id="Q2NL51"/>
<dbReference type="OMA" id="CLHAFFD"/>
<dbReference type="OrthoDB" id="272141at2759"/>
<dbReference type="PhylomeDB" id="Q2NL51"/>
<dbReference type="TreeFam" id="TF101104"/>
<dbReference type="BRENDA" id="2.7.11.26">
    <property type="organism ID" value="3474"/>
</dbReference>
<dbReference type="BioGRID-ORCS" id="606496">
    <property type="hits" value="4 hits in 79 CRISPR screens"/>
</dbReference>
<dbReference type="ChiTaRS" id="Gsk3a">
    <property type="organism name" value="mouse"/>
</dbReference>
<dbReference type="PRO" id="PR:Q2NL51"/>
<dbReference type="Proteomes" id="UP000000589">
    <property type="component" value="Chromosome 7"/>
</dbReference>
<dbReference type="RNAct" id="Q2NL51">
    <property type="molecule type" value="protein"/>
</dbReference>
<dbReference type="Bgee" id="ENSMUSG00000057177">
    <property type="expression patterns" value="Expressed in motor neuron and 250 other cell types or tissues"/>
</dbReference>
<dbReference type="ExpressionAtlas" id="Q2NL51">
    <property type="expression patterns" value="baseline and differential"/>
</dbReference>
<dbReference type="GO" id="GO:0030877">
    <property type="term" value="C:beta-catenin destruction complex"/>
    <property type="evidence" value="ECO:0000303"/>
    <property type="project" value="ComplexPortal"/>
</dbReference>
<dbReference type="GO" id="GO:0005739">
    <property type="term" value="C:mitochondrion"/>
    <property type="evidence" value="ECO:0007669"/>
    <property type="project" value="GOC"/>
</dbReference>
<dbReference type="GO" id="GO:0005524">
    <property type="term" value="F:ATP binding"/>
    <property type="evidence" value="ECO:0007669"/>
    <property type="project" value="UniProtKB-KW"/>
</dbReference>
<dbReference type="GO" id="GO:0034236">
    <property type="term" value="F:protein kinase A catalytic subunit binding"/>
    <property type="evidence" value="ECO:0007669"/>
    <property type="project" value="Ensembl"/>
</dbReference>
<dbReference type="GO" id="GO:0004672">
    <property type="term" value="F:protein kinase activity"/>
    <property type="evidence" value="ECO:0000314"/>
    <property type="project" value="UniProtKB"/>
</dbReference>
<dbReference type="GO" id="GO:0106310">
    <property type="term" value="F:protein serine kinase activity"/>
    <property type="evidence" value="ECO:0000315"/>
    <property type="project" value="ARUK-UCL"/>
</dbReference>
<dbReference type="GO" id="GO:0004674">
    <property type="term" value="F:protein serine/threonine kinase activity"/>
    <property type="evidence" value="ECO:0000314"/>
    <property type="project" value="MGI"/>
</dbReference>
<dbReference type="GO" id="GO:0005102">
    <property type="term" value="F:signaling receptor binding"/>
    <property type="evidence" value="ECO:0000353"/>
    <property type="project" value="ARUK-UCL"/>
</dbReference>
<dbReference type="GO" id="GO:0141068">
    <property type="term" value="P:autosome genomic imprinting"/>
    <property type="evidence" value="ECO:0000315"/>
    <property type="project" value="BHF-UCL"/>
</dbReference>
<dbReference type="GO" id="GO:0003214">
    <property type="term" value="P:cardiac left ventricle morphogenesis"/>
    <property type="evidence" value="ECO:0000315"/>
    <property type="project" value="BHF-UCL"/>
</dbReference>
<dbReference type="GO" id="GO:0016477">
    <property type="term" value="P:cell migration"/>
    <property type="evidence" value="ECO:0000316"/>
    <property type="project" value="MGI"/>
</dbReference>
<dbReference type="GO" id="GO:0071385">
    <property type="term" value="P:cellular response to glucocorticoid stimulus"/>
    <property type="evidence" value="ECO:0000316"/>
    <property type="project" value="ARUK-UCL"/>
</dbReference>
<dbReference type="GO" id="GO:0036016">
    <property type="term" value="P:cellular response to interleukin-3"/>
    <property type="evidence" value="ECO:0000314"/>
    <property type="project" value="UniProtKB"/>
</dbReference>
<dbReference type="GO" id="GO:0071285">
    <property type="term" value="P:cellular response to lithium ion"/>
    <property type="evidence" value="ECO:0000314"/>
    <property type="project" value="MGI"/>
</dbReference>
<dbReference type="GO" id="GO:0097191">
    <property type="term" value="P:extrinsic apoptotic signaling pathway"/>
    <property type="evidence" value="ECO:0000316"/>
    <property type="project" value="ARUK-UCL"/>
</dbReference>
<dbReference type="GO" id="GO:0097192">
    <property type="term" value="P:extrinsic apoptotic signaling pathway in absence of ligand"/>
    <property type="evidence" value="ECO:0000314"/>
    <property type="project" value="UniProtKB"/>
</dbReference>
<dbReference type="GO" id="GO:0005977">
    <property type="term" value="P:glycogen metabolic process"/>
    <property type="evidence" value="ECO:0007669"/>
    <property type="project" value="UniProtKB-KW"/>
</dbReference>
<dbReference type="GO" id="GO:0008286">
    <property type="term" value="P:insulin receptor signaling pathway"/>
    <property type="evidence" value="ECO:0000314"/>
    <property type="project" value="BHF-UCL"/>
</dbReference>
<dbReference type="GO" id="GO:0031663">
    <property type="term" value="P:lipopolysaccharide-mediated signaling pathway"/>
    <property type="evidence" value="ECO:0000315"/>
    <property type="project" value="ARUK-UCL"/>
</dbReference>
<dbReference type="GO" id="GO:0061052">
    <property type="term" value="P:negative regulation of cell growth involved in cardiac muscle cell development"/>
    <property type="evidence" value="ECO:0000315"/>
    <property type="project" value="BHF-UCL"/>
</dbReference>
<dbReference type="GO" id="GO:0046325">
    <property type="term" value="P:negative regulation of D-glucose import"/>
    <property type="evidence" value="ECO:0007669"/>
    <property type="project" value="Ensembl"/>
</dbReference>
<dbReference type="GO" id="GO:0046627">
    <property type="term" value="P:negative regulation of insulin receptor signaling pathway"/>
    <property type="evidence" value="ECO:0007669"/>
    <property type="project" value="Ensembl"/>
</dbReference>
<dbReference type="GO" id="GO:0032007">
    <property type="term" value="P:negative regulation of TOR signaling"/>
    <property type="evidence" value="ECO:0000315"/>
    <property type="project" value="BHF-UCL"/>
</dbReference>
<dbReference type="GO" id="GO:0007399">
    <property type="term" value="P:nervous system development"/>
    <property type="evidence" value="ECO:0007669"/>
    <property type="project" value="UniProtKB-KW"/>
</dbReference>
<dbReference type="GO" id="GO:0071879">
    <property type="term" value="P:positive regulation of adenylate cyclase-activating adrenergic receptor signaling pathway"/>
    <property type="evidence" value="ECO:0000315"/>
    <property type="project" value="BHF-UCL"/>
</dbReference>
<dbReference type="GO" id="GO:0106071">
    <property type="term" value="P:positive regulation of adenylate cyclase-activating G protein-coupled receptor signaling pathway"/>
    <property type="evidence" value="ECO:0000315"/>
    <property type="project" value="BHF-UCL"/>
</dbReference>
<dbReference type="GO" id="GO:1902004">
    <property type="term" value="P:positive regulation of amyloid-beta formation"/>
    <property type="evidence" value="ECO:0007669"/>
    <property type="project" value="Ensembl"/>
</dbReference>
<dbReference type="GO" id="GO:0010508">
    <property type="term" value="P:positive regulation of autophagy"/>
    <property type="evidence" value="ECO:0000314"/>
    <property type="project" value="UniProtKB"/>
</dbReference>
<dbReference type="GO" id="GO:0010628">
    <property type="term" value="P:positive regulation of gene expression"/>
    <property type="evidence" value="ECO:0000316"/>
    <property type="project" value="ARUK-UCL"/>
</dbReference>
<dbReference type="GO" id="GO:0045823">
    <property type="term" value="P:positive regulation of heart contraction"/>
    <property type="evidence" value="ECO:0000315"/>
    <property type="project" value="BHF-UCL"/>
</dbReference>
<dbReference type="GO" id="GO:1901030">
    <property type="term" value="P:positive regulation of mitochondrial outer membrane permeabilization involved in apoptotic signaling pathway"/>
    <property type="evidence" value="ECO:0000314"/>
    <property type="project" value="UniProtKB"/>
</dbReference>
<dbReference type="GO" id="GO:0032436">
    <property type="term" value="P:positive regulation of proteasomal ubiquitin-dependent protein catabolic process"/>
    <property type="evidence" value="ECO:0007669"/>
    <property type="project" value="Ensembl"/>
</dbReference>
<dbReference type="GO" id="GO:1903955">
    <property type="term" value="P:positive regulation of protein targeting to mitochondrion"/>
    <property type="evidence" value="ECO:0007669"/>
    <property type="project" value="Ensembl"/>
</dbReference>
<dbReference type="GO" id="GO:0031398">
    <property type="term" value="P:positive regulation of protein ubiquitination"/>
    <property type="evidence" value="ECO:0007669"/>
    <property type="project" value="Ensembl"/>
</dbReference>
<dbReference type="GO" id="GO:1900026">
    <property type="term" value="P:positive regulation of substrate adhesion-dependent cell spreading"/>
    <property type="evidence" value="ECO:0000315"/>
    <property type="project" value="ARUK-UCL"/>
</dbReference>
<dbReference type="GO" id="GO:0045944">
    <property type="term" value="P:positive regulation of transcription by RNA polymerase II"/>
    <property type="evidence" value="ECO:0000315"/>
    <property type="project" value="BHF-UCL"/>
</dbReference>
<dbReference type="GO" id="GO:0043161">
    <property type="term" value="P:proteasome-mediated ubiquitin-dependent protein catabolic process"/>
    <property type="evidence" value="ECO:0000314"/>
    <property type="project" value="UniProtKB"/>
</dbReference>
<dbReference type="GO" id="GO:0006468">
    <property type="term" value="P:protein phosphorylation"/>
    <property type="evidence" value="ECO:0000315"/>
    <property type="project" value="UniProtKB"/>
</dbReference>
<dbReference type="GO" id="GO:1901524">
    <property type="term" value="P:regulation of mitophagy"/>
    <property type="evidence" value="ECO:0007669"/>
    <property type="project" value="Ensembl"/>
</dbReference>
<dbReference type="GO" id="GO:0003073">
    <property type="term" value="P:regulation of systemic arterial blood pressure"/>
    <property type="evidence" value="ECO:0000315"/>
    <property type="project" value="BHF-UCL"/>
</dbReference>
<dbReference type="GO" id="GO:0016055">
    <property type="term" value="P:Wnt signaling pathway"/>
    <property type="evidence" value="ECO:0007669"/>
    <property type="project" value="UniProtKB-KW"/>
</dbReference>
<dbReference type="CDD" id="cd14137">
    <property type="entry name" value="STKc_GSK3"/>
    <property type="match status" value="1"/>
</dbReference>
<dbReference type="FunFam" id="1.10.510.10:FF:000055">
    <property type="entry name" value="Glycogen synthase kinase-3 beta"/>
    <property type="match status" value="1"/>
</dbReference>
<dbReference type="FunFam" id="3.30.200.20:FF:000009">
    <property type="entry name" value="Glycogen synthase kinase-3 beta"/>
    <property type="match status" value="1"/>
</dbReference>
<dbReference type="Gene3D" id="3.30.200.20">
    <property type="entry name" value="Phosphorylase Kinase, domain 1"/>
    <property type="match status" value="1"/>
</dbReference>
<dbReference type="Gene3D" id="1.10.510.10">
    <property type="entry name" value="Transferase(Phosphotransferase) domain 1"/>
    <property type="match status" value="1"/>
</dbReference>
<dbReference type="InterPro" id="IPR050591">
    <property type="entry name" value="GSK-3"/>
</dbReference>
<dbReference type="InterPro" id="IPR011009">
    <property type="entry name" value="Kinase-like_dom_sf"/>
</dbReference>
<dbReference type="InterPro" id="IPR000719">
    <property type="entry name" value="Prot_kinase_dom"/>
</dbReference>
<dbReference type="InterPro" id="IPR017441">
    <property type="entry name" value="Protein_kinase_ATP_BS"/>
</dbReference>
<dbReference type="InterPro" id="IPR008271">
    <property type="entry name" value="Ser/Thr_kinase_AS"/>
</dbReference>
<dbReference type="InterPro" id="IPR039192">
    <property type="entry name" value="STKc_GSK3"/>
</dbReference>
<dbReference type="PANTHER" id="PTHR24057">
    <property type="entry name" value="GLYCOGEN SYNTHASE KINASE-3 ALPHA"/>
    <property type="match status" value="1"/>
</dbReference>
<dbReference type="PANTHER" id="PTHR24057:SF14">
    <property type="entry name" value="GLYCOGEN SYNTHASE KINASE-3 ALPHA"/>
    <property type="match status" value="1"/>
</dbReference>
<dbReference type="Pfam" id="PF00069">
    <property type="entry name" value="Pkinase"/>
    <property type="match status" value="1"/>
</dbReference>
<dbReference type="SMART" id="SM00220">
    <property type="entry name" value="S_TKc"/>
    <property type="match status" value="1"/>
</dbReference>
<dbReference type="SUPFAM" id="SSF56112">
    <property type="entry name" value="Protein kinase-like (PK-like)"/>
    <property type="match status" value="1"/>
</dbReference>
<dbReference type="PROSITE" id="PS00107">
    <property type="entry name" value="PROTEIN_KINASE_ATP"/>
    <property type="match status" value="1"/>
</dbReference>
<dbReference type="PROSITE" id="PS50011">
    <property type="entry name" value="PROTEIN_KINASE_DOM"/>
    <property type="match status" value="1"/>
</dbReference>
<dbReference type="PROSITE" id="PS00108">
    <property type="entry name" value="PROTEIN_KINASE_ST"/>
    <property type="match status" value="1"/>
</dbReference>
<organism>
    <name type="scientific">Mus musculus</name>
    <name type="common">Mouse</name>
    <dbReference type="NCBI Taxonomy" id="10090"/>
    <lineage>
        <taxon>Eukaryota</taxon>
        <taxon>Metazoa</taxon>
        <taxon>Chordata</taxon>
        <taxon>Craniata</taxon>
        <taxon>Vertebrata</taxon>
        <taxon>Euteleostomi</taxon>
        <taxon>Mammalia</taxon>
        <taxon>Eutheria</taxon>
        <taxon>Euarchontoglires</taxon>
        <taxon>Glires</taxon>
        <taxon>Rodentia</taxon>
        <taxon>Myomorpha</taxon>
        <taxon>Muroidea</taxon>
        <taxon>Muridae</taxon>
        <taxon>Murinae</taxon>
        <taxon>Mus</taxon>
        <taxon>Mus</taxon>
    </lineage>
</organism>
<comment type="function">
    <text evidence="2 3 7 9 10 11 12">Constitutively active protein kinase that acts as a negative regulator in the hormonal control of glucose homeostasis, Wnt signaling and regulation of transcription factors and microtubules, by phosphorylating and inactivating glycogen synthase (GYS1 or GYS2), CTNNB1/beta-catenin, APC and AXIN1 (PubMed:15791206, PubMed:17908561). Requires primed phosphorylation of the majority of its substrates (PubMed:22539723). Contributes to insulin regulation of glycogen synthesis by phosphorylating and inhibiting GYS1 activity and hence glycogen synthesis (PubMed:15791206, PubMed:17908561). Regulates glycogen metabolism in liver, but not in muscle (PubMed:17908561). May also mediate the development of insulin resistance by regulating activation of transcription factors (By similarity). In Wnt signaling, regulates the level and transcriptional activity of nuclear CTNNB1/beta-catenin (PubMed:15791206). Facilitates amyloid precursor protein (APP) processing and the generation of APP-derived amyloid plaques found in Alzheimer disease (By similarity). May be involved in the regulation of replication in pancreatic beta-cells (By similarity). Is necessary for the establishment of neuronal polarity and axon outgrowth (PubMed:17391670). Through phosphorylation of the anti-apoptotic protein MCL1, may control cell apoptosis in response to growth factors deprivation (PubMed:16543145). Acts as a regulator of autophagy by mediating phosphorylation of KAT5/TIP60 under starvation conditions, activating KAT5/TIP60 acetyltransferase activity and promoting acetylation of key autophagy regulators, such as ULK1 and RUBCNL/Pacer (PubMed:22539723). Negatively regulates extrinsic apoptotic signaling pathway via death domain receptors. Promotes the formation of an anti-apoptotic complex, made of DDX3X, BRIC2 and GSK3B, at death receptors, including TNFRSF10B. The anti-apoptotic function is most effective with weak apoptotic signals and can be overcome by stronger stimulation (By similarity).</text>
</comment>
<comment type="catalytic activity">
    <reaction>
        <text>L-seryl-[tau protein] + ATP = O-phospho-L-seryl-[tau protein] + ADP + H(+)</text>
        <dbReference type="Rhea" id="RHEA:12801"/>
        <dbReference type="Rhea" id="RHEA-COMP:13701"/>
        <dbReference type="Rhea" id="RHEA-COMP:13702"/>
        <dbReference type="ChEBI" id="CHEBI:15378"/>
        <dbReference type="ChEBI" id="CHEBI:29999"/>
        <dbReference type="ChEBI" id="CHEBI:30616"/>
        <dbReference type="ChEBI" id="CHEBI:83421"/>
        <dbReference type="ChEBI" id="CHEBI:456216"/>
        <dbReference type="EC" id="2.7.11.26"/>
    </reaction>
</comment>
<comment type="catalytic activity">
    <reaction>
        <text>L-threonyl-[tau protein] + ATP = O-phospho-L-threonyl-[tau protein] + ADP + H(+)</text>
        <dbReference type="Rhea" id="RHEA:53904"/>
        <dbReference type="Rhea" id="RHEA-COMP:13703"/>
        <dbReference type="Rhea" id="RHEA-COMP:13704"/>
        <dbReference type="ChEBI" id="CHEBI:15378"/>
        <dbReference type="ChEBI" id="CHEBI:30013"/>
        <dbReference type="ChEBI" id="CHEBI:30616"/>
        <dbReference type="ChEBI" id="CHEBI:61977"/>
        <dbReference type="ChEBI" id="CHEBI:456216"/>
        <dbReference type="EC" id="2.7.11.26"/>
    </reaction>
</comment>
<comment type="catalytic activity">
    <reaction evidence="12">
        <text>L-seryl-[protein] + ATP = O-phospho-L-seryl-[protein] + ADP + H(+)</text>
        <dbReference type="Rhea" id="RHEA:17989"/>
        <dbReference type="Rhea" id="RHEA-COMP:9863"/>
        <dbReference type="Rhea" id="RHEA-COMP:11604"/>
        <dbReference type="ChEBI" id="CHEBI:15378"/>
        <dbReference type="ChEBI" id="CHEBI:29999"/>
        <dbReference type="ChEBI" id="CHEBI:30616"/>
        <dbReference type="ChEBI" id="CHEBI:83421"/>
        <dbReference type="ChEBI" id="CHEBI:456216"/>
        <dbReference type="EC" id="2.7.11.1"/>
    </reaction>
</comment>
<comment type="catalytic activity">
    <reaction>
        <text>L-threonyl-[protein] + ATP = O-phospho-L-threonyl-[protein] + ADP + H(+)</text>
        <dbReference type="Rhea" id="RHEA:46608"/>
        <dbReference type="Rhea" id="RHEA-COMP:11060"/>
        <dbReference type="Rhea" id="RHEA-COMP:11605"/>
        <dbReference type="ChEBI" id="CHEBI:15378"/>
        <dbReference type="ChEBI" id="CHEBI:30013"/>
        <dbReference type="ChEBI" id="CHEBI:30616"/>
        <dbReference type="ChEBI" id="CHEBI:61977"/>
        <dbReference type="ChEBI" id="CHEBI:456216"/>
        <dbReference type="EC" id="2.7.11.1"/>
    </reaction>
</comment>
<comment type="activity regulation">
    <text>Activated by phosphorylation at Tyr-279. In response to insulin, inhibited by phosphorylation at Ser-21 by PKB/AKT1; phosphorylation at this site causes a conformational change, preventing access of substrates to the active site. Inhibited by lithium.</text>
</comment>
<comment type="subunit">
    <text evidence="2 8">Monomer. Interacts with AXIN1 and CTNNB1/beta-catenin (By similarity). Interacts with ARRB2 (PubMed:16051150). Interacts with CTNND2 (By similarity). Interacts with LMBR1L (By similarity). Interacts with DDX3X (By similarity). Interacts with TNFRSF10B (By similarity).</text>
</comment>
<comment type="PTM">
    <text evidence="7">Phosphorylated by AKT1 at Ser-21: upon insulin-mediated signaling, the activated PKB/AKT1 protein kinase phosphorylates and deactivates GSK3A, resulting in the dephosphorylation and activation of GYS1. Activated by phosphorylation at Tyr-279.</text>
</comment>
<comment type="disruption phenotype">
    <text evidence="11">Enhanced glucose tolerance and insulin sensitivity, increased activity of hepatic glycogen synthase, elevated hepatic glycogen storage and reduced fat mass.</text>
</comment>
<comment type="similarity">
    <text evidence="13">Belongs to the protein kinase superfamily. CMGC Ser/Thr protein kinase family. GSK-3 subfamily.</text>
</comment>
<accession>Q2NL51</accession>
<name>GSK3A_MOUSE</name>
<evidence type="ECO:0000250" key="1">
    <source>
        <dbReference type="UniProtKB" id="P18265"/>
    </source>
</evidence>
<evidence type="ECO:0000250" key="2">
    <source>
        <dbReference type="UniProtKB" id="P49840"/>
    </source>
</evidence>
<evidence type="ECO:0000250" key="3">
    <source>
        <dbReference type="UniProtKB" id="P49841"/>
    </source>
</evidence>
<evidence type="ECO:0000255" key="4">
    <source>
        <dbReference type="PROSITE-ProRule" id="PRU00159"/>
    </source>
</evidence>
<evidence type="ECO:0000255" key="5">
    <source>
        <dbReference type="PROSITE-ProRule" id="PRU10027"/>
    </source>
</evidence>
<evidence type="ECO:0000256" key="6">
    <source>
        <dbReference type="SAM" id="MobiDB-lite"/>
    </source>
</evidence>
<evidence type="ECO:0000269" key="7">
    <source>
    </source>
</evidence>
<evidence type="ECO:0000269" key="8">
    <source>
    </source>
</evidence>
<evidence type="ECO:0000269" key="9">
    <source>
    </source>
</evidence>
<evidence type="ECO:0000269" key="10">
    <source>
    </source>
</evidence>
<evidence type="ECO:0000269" key="11">
    <source>
    </source>
</evidence>
<evidence type="ECO:0000269" key="12">
    <source>
    </source>
</evidence>
<evidence type="ECO:0000305" key="13"/>
<keyword id="KW-0007">Acetylation</keyword>
<keyword id="KW-0067">ATP-binding</keyword>
<keyword id="KW-0119">Carbohydrate metabolism</keyword>
<keyword id="KW-0321">Glycogen metabolism</keyword>
<keyword id="KW-0418">Kinase</keyword>
<keyword id="KW-0524">Neurogenesis</keyword>
<keyword id="KW-0547">Nucleotide-binding</keyword>
<keyword id="KW-0597">Phosphoprotein</keyword>
<keyword id="KW-1185">Reference proteome</keyword>
<keyword id="KW-0723">Serine/threonine-protein kinase</keyword>
<keyword id="KW-0734">Signal transduction inhibitor</keyword>
<keyword id="KW-0808">Transferase</keyword>
<keyword id="KW-0879">Wnt signaling pathway</keyword>
<proteinExistence type="evidence at protein level"/>
<reference key="1">
    <citation type="journal article" date="2009" name="PLoS Biol.">
        <title>Lineage-specific biology revealed by a finished genome assembly of the mouse.</title>
        <authorList>
            <person name="Church D.M."/>
            <person name="Goodstadt L."/>
            <person name="Hillier L.W."/>
            <person name="Zody M.C."/>
            <person name="Goldstein S."/>
            <person name="She X."/>
            <person name="Bult C.J."/>
            <person name="Agarwala R."/>
            <person name="Cherry J.L."/>
            <person name="DiCuccio M."/>
            <person name="Hlavina W."/>
            <person name="Kapustin Y."/>
            <person name="Meric P."/>
            <person name="Maglott D."/>
            <person name="Birtle Z."/>
            <person name="Marques A.C."/>
            <person name="Graves T."/>
            <person name="Zhou S."/>
            <person name="Teague B."/>
            <person name="Potamousis K."/>
            <person name="Churas C."/>
            <person name="Place M."/>
            <person name="Herschleb J."/>
            <person name="Runnheim R."/>
            <person name="Forrest D."/>
            <person name="Amos-Landgraf J."/>
            <person name="Schwartz D.C."/>
            <person name="Cheng Z."/>
            <person name="Lindblad-Toh K."/>
            <person name="Eichler E.E."/>
            <person name="Ponting C.P."/>
        </authorList>
    </citation>
    <scope>NUCLEOTIDE SEQUENCE [LARGE SCALE GENOMIC DNA]</scope>
    <source>
        <strain>C57BL/6J</strain>
    </source>
</reference>
<reference key="2">
    <citation type="journal article" date="2004" name="Genome Res.">
        <title>The status, quality, and expansion of the NIH full-length cDNA project: the Mammalian Gene Collection (MGC).</title>
        <authorList>
            <consortium name="The MGC Project Team"/>
        </authorList>
    </citation>
    <scope>NUCLEOTIDE SEQUENCE [LARGE SCALE MRNA] OF 227-490</scope>
    <source>
        <tissue>Eye</tissue>
    </source>
</reference>
<reference key="3">
    <citation type="journal article" date="2005" name="Cell">
        <title>An Akt/beta-arrestin 2/PP2A signaling complex mediates dopaminergic neurotransmission and behavior.</title>
        <authorList>
            <person name="Beaulieu J.-M."/>
            <person name="Sotnikova T.D."/>
            <person name="Marion S."/>
            <person name="Lefkowitz R.J."/>
            <person name="Gainetdinov R.R."/>
            <person name="Caron M.G."/>
        </authorList>
    </citation>
    <scope>INTERACTION WITH ARRB2</scope>
</reference>
<reference key="4">
    <citation type="journal article" date="2005" name="EMBO J.">
        <title>Role that phosphorylation of GSK3 plays in insulin and Wnt signalling defined by knockin analysis.</title>
        <authorList>
            <person name="McManus E.J."/>
            <person name="Sakamoto K."/>
            <person name="Armit L.J."/>
            <person name="Ronaldson L."/>
            <person name="Shpiro N."/>
            <person name="Marquez R."/>
            <person name="Alessi D.R."/>
        </authorList>
    </citation>
    <scope>FUNCTION</scope>
    <scope>MUTAGENESIS OF SER-21</scope>
    <scope>PHOSPHORYLATION AT SER-21</scope>
</reference>
<reference key="5">
    <citation type="journal article" date="2006" name="Mol. Cell">
        <title>Glycogen synthase kinase-3 regulates mitochondrial outer membrane permeabilization and apoptosis by destabilization of MCL-1.</title>
        <authorList>
            <person name="Maurer U."/>
            <person name="Charvet C."/>
            <person name="Wagman A.S."/>
            <person name="Dejardin E."/>
            <person name="Green D.R."/>
        </authorList>
    </citation>
    <scope>FUNCTION IN MCL1 PHOSPHORYLATION</scope>
</reference>
<reference key="6">
    <citation type="journal article" date="2007" name="FEBS Lett.">
        <title>GSK3 alpha and GSK3 beta are necessary for axon formation.</title>
        <authorList>
            <person name="Garrido J.J."/>
            <person name="Simon D."/>
            <person name="Varea O."/>
            <person name="Wandosell F."/>
        </authorList>
    </citation>
    <scope>FUNCTION IN AXON FORMATION</scope>
    <scope>TISSUE SPECIFICITY</scope>
</reference>
<reference key="7">
    <citation type="journal article" date="2007" name="Cell Metab.">
        <title>Glycogen synthase kinase 3alpha-specific regulation of murine hepatic glycogen metabolism.</title>
        <authorList>
            <person name="MacAulay K."/>
            <person name="Doble B.W."/>
            <person name="Patel S."/>
            <person name="Hansotia T."/>
            <person name="Sinclair E.M."/>
            <person name="Drucker D.J."/>
            <person name="Nagy A."/>
            <person name="Woodgett J.R."/>
        </authorList>
    </citation>
    <scope>FUNCTION IN HEPATIC GLYCOGEN METABOLISM</scope>
    <scope>DISRUPTION PHENOTYPE</scope>
</reference>
<reference key="8">
    <citation type="journal article" date="2010" name="Cell">
        <title>A tissue-specific atlas of mouse protein phosphorylation and expression.</title>
        <authorList>
            <person name="Huttlin E.L."/>
            <person name="Jedrychowski M.P."/>
            <person name="Elias J.E."/>
            <person name="Goswami T."/>
            <person name="Rad R."/>
            <person name="Beausoleil S.A."/>
            <person name="Villen J."/>
            <person name="Haas W."/>
            <person name="Sowa M.E."/>
            <person name="Gygi S.P."/>
        </authorList>
    </citation>
    <scope>IDENTIFICATION BY MASS SPECTROMETRY [LARGE SCALE ANALYSIS]</scope>
    <source>
        <tissue>Brain</tissue>
        <tissue>Brown adipose tissue</tissue>
        <tissue>Heart</tissue>
        <tissue>Lung</tissue>
        <tissue>Spleen</tissue>
        <tissue>Testis</tissue>
    </source>
</reference>
<reference key="9">
    <citation type="journal article" date="2012" name="Science">
        <title>GSK3-TIP60-ULK1 signaling pathway links growth factor deprivation to autophagy.</title>
        <authorList>
            <person name="Lin S.Y."/>
            <person name="Li T.Y."/>
            <person name="Liu Q."/>
            <person name="Zhang C."/>
            <person name="Li X."/>
            <person name="Chen Y."/>
            <person name="Zhang S.M."/>
            <person name="Lian G."/>
            <person name="Liu Q."/>
            <person name="Ruan K."/>
            <person name="Wang Z."/>
            <person name="Zhang C.S."/>
            <person name="Chien K.Y."/>
            <person name="Wu J."/>
            <person name="Li Q."/>
            <person name="Han J."/>
            <person name="Lin S.C."/>
        </authorList>
    </citation>
    <scope>FUNCTION</scope>
    <scope>CATALYTIC ACTIVITY</scope>
</reference>